<proteinExistence type="inferred from homology"/>
<accession>Q2Y7R5</accession>
<gene>
    <name evidence="1" type="primary">trpA</name>
    <name type="ordered locus">Nmul_A1911</name>
</gene>
<comment type="function">
    <text evidence="1">The alpha subunit is responsible for the aldol cleavage of indoleglycerol phosphate to indole and glyceraldehyde 3-phosphate.</text>
</comment>
<comment type="catalytic activity">
    <reaction evidence="1">
        <text>(1S,2R)-1-C-(indol-3-yl)glycerol 3-phosphate + L-serine = D-glyceraldehyde 3-phosphate + L-tryptophan + H2O</text>
        <dbReference type="Rhea" id="RHEA:10532"/>
        <dbReference type="ChEBI" id="CHEBI:15377"/>
        <dbReference type="ChEBI" id="CHEBI:33384"/>
        <dbReference type="ChEBI" id="CHEBI:57912"/>
        <dbReference type="ChEBI" id="CHEBI:58866"/>
        <dbReference type="ChEBI" id="CHEBI:59776"/>
        <dbReference type="EC" id="4.2.1.20"/>
    </reaction>
</comment>
<comment type="pathway">
    <text evidence="1">Amino-acid biosynthesis; L-tryptophan biosynthesis; L-tryptophan from chorismate: step 5/5.</text>
</comment>
<comment type="subunit">
    <text evidence="1">Tetramer of two alpha and two beta chains.</text>
</comment>
<comment type="similarity">
    <text evidence="1">Belongs to the TrpA family.</text>
</comment>
<organism>
    <name type="scientific">Nitrosospira multiformis (strain ATCC 25196 / NCIMB 11849 / C 71)</name>
    <dbReference type="NCBI Taxonomy" id="323848"/>
    <lineage>
        <taxon>Bacteria</taxon>
        <taxon>Pseudomonadati</taxon>
        <taxon>Pseudomonadota</taxon>
        <taxon>Betaproteobacteria</taxon>
        <taxon>Nitrosomonadales</taxon>
        <taxon>Nitrosomonadaceae</taxon>
        <taxon>Nitrosospira</taxon>
    </lineage>
</organism>
<protein>
    <recommendedName>
        <fullName evidence="1">Tryptophan synthase alpha chain</fullName>
        <ecNumber evidence="1">4.2.1.20</ecNumber>
    </recommendedName>
</protein>
<name>TRPA_NITMU</name>
<keyword id="KW-0028">Amino-acid biosynthesis</keyword>
<keyword id="KW-0057">Aromatic amino acid biosynthesis</keyword>
<keyword id="KW-0456">Lyase</keyword>
<keyword id="KW-1185">Reference proteome</keyword>
<keyword id="KW-0822">Tryptophan biosynthesis</keyword>
<evidence type="ECO:0000255" key="1">
    <source>
        <dbReference type="HAMAP-Rule" id="MF_00131"/>
    </source>
</evidence>
<feature type="chain" id="PRO_1000018238" description="Tryptophan synthase alpha chain">
    <location>
        <begin position="1"/>
        <end position="279"/>
    </location>
</feature>
<feature type="active site" description="Proton acceptor" evidence="1">
    <location>
        <position position="49"/>
    </location>
</feature>
<feature type="active site" description="Proton acceptor" evidence="1">
    <location>
        <position position="60"/>
    </location>
</feature>
<dbReference type="EC" id="4.2.1.20" evidence="1"/>
<dbReference type="EMBL" id="CP000103">
    <property type="protein sequence ID" value="ABB75206.1"/>
    <property type="molecule type" value="Genomic_DNA"/>
</dbReference>
<dbReference type="RefSeq" id="WP_011381226.1">
    <property type="nucleotide sequence ID" value="NC_007614.1"/>
</dbReference>
<dbReference type="SMR" id="Q2Y7R5"/>
<dbReference type="STRING" id="323848.Nmul_A1911"/>
<dbReference type="KEGG" id="nmu:Nmul_A1911"/>
<dbReference type="eggNOG" id="COG0159">
    <property type="taxonomic scope" value="Bacteria"/>
</dbReference>
<dbReference type="HOGENOM" id="CLU_016734_0_0_4"/>
<dbReference type="OrthoDB" id="9804578at2"/>
<dbReference type="UniPathway" id="UPA00035">
    <property type="reaction ID" value="UER00044"/>
</dbReference>
<dbReference type="Proteomes" id="UP000002718">
    <property type="component" value="Chromosome"/>
</dbReference>
<dbReference type="GO" id="GO:0005829">
    <property type="term" value="C:cytosol"/>
    <property type="evidence" value="ECO:0007669"/>
    <property type="project" value="TreeGrafter"/>
</dbReference>
<dbReference type="GO" id="GO:0004834">
    <property type="term" value="F:tryptophan synthase activity"/>
    <property type="evidence" value="ECO:0007669"/>
    <property type="project" value="UniProtKB-UniRule"/>
</dbReference>
<dbReference type="CDD" id="cd04724">
    <property type="entry name" value="Tryptophan_synthase_alpha"/>
    <property type="match status" value="1"/>
</dbReference>
<dbReference type="FunFam" id="3.20.20.70:FF:000037">
    <property type="entry name" value="Tryptophan synthase alpha chain"/>
    <property type="match status" value="1"/>
</dbReference>
<dbReference type="Gene3D" id="3.20.20.70">
    <property type="entry name" value="Aldolase class I"/>
    <property type="match status" value="1"/>
</dbReference>
<dbReference type="HAMAP" id="MF_00131">
    <property type="entry name" value="Trp_synth_alpha"/>
    <property type="match status" value="1"/>
</dbReference>
<dbReference type="InterPro" id="IPR013785">
    <property type="entry name" value="Aldolase_TIM"/>
</dbReference>
<dbReference type="InterPro" id="IPR011060">
    <property type="entry name" value="RibuloseP-bd_barrel"/>
</dbReference>
<dbReference type="InterPro" id="IPR018204">
    <property type="entry name" value="Trp_synthase_alpha_AS"/>
</dbReference>
<dbReference type="InterPro" id="IPR002028">
    <property type="entry name" value="Trp_synthase_suA"/>
</dbReference>
<dbReference type="NCBIfam" id="TIGR00262">
    <property type="entry name" value="trpA"/>
    <property type="match status" value="1"/>
</dbReference>
<dbReference type="PANTHER" id="PTHR43406:SF1">
    <property type="entry name" value="TRYPTOPHAN SYNTHASE ALPHA CHAIN, CHLOROPLASTIC"/>
    <property type="match status" value="1"/>
</dbReference>
<dbReference type="PANTHER" id="PTHR43406">
    <property type="entry name" value="TRYPTOPHAN SYNTHASE, ALPHA CHAIN"/>
    <property type="match status" value="1"/>
</dbReference>
<dbReference type="Pfam" id="PF00290">
    <property type="entry name" value="Trp_syntA"/>
    <property type="match status" value="1"/>
</dbReference>
<dbReference type="SUPFAM" id="SSF51366">
    <property type="entry name" value="Ribulose-phoshate binding barrel"/>
    <property type="match status" value="1"/>
</dbReference>
<dbReference type="PROSITE" id="PS00167">
    <property type="entry name" value="TRP_SYNTHASE_ALPHA"/>
    <property type="match status" value="1"/>
</dbReference>
<sequence length="279" mass="30178">MSRISTLFGKLLQNRRKALIPFITAGDPEPGMMVPLMHELVQAGADVIELGVPFSDPMADGPTIQRSSERALKHRVSLQDVLAMVGEFRESDSSTPVVLMGYANPVEAMGYDAFTARSKACGVDGVLIVDYPPEESVKWVEYLKRQNIAPIFLLSPTTPQQRVERVASLAEGYVYYVSLKGVTGSLHLDLHDVAEKLDGLRSRISIPIGVGFGIRDGATARAVAELADAVVVGSRIIEEIERSPKAEVLTNVHRLVKSLRIAIDAASPAPSAAVKLTHL</sequence>
<reference key="1">
    <citation type="submission" date="2005-08" db="EMBL/GenBank/DDBJ databases">
        <title>Complete sequence of chromosome 1 of Nitrosospira multiformis ATCC 25196.</title>
        <authorList>
            <person name="Copeland A."/>
            <person name="Lucas S."/>
            <person name="Lapidus A."/>
            <person name="Barry K."/>
            <person name="Detter J.C."/>
            <person name="Glavina T."/>
            <person name="Hammon N."/>
            <person name="Israni S."/>
            <person name="Pitluck S."/>
            <person name="Chain P."/>
            <person name="Malfatti S."/>
            <person name="Shin M."/>
            <person name="Vergez L."/>
            <person name="Schmutz J."/>
            <person name="Larimer F."/>
            <person name="Land M."/>
            <person name="Hauser L."/>
            <person name="Kyrpides N."/>
            <person name="Lykidis A."/>
            <person name="Richardson P."/>
        </authorList>
    </citation>
    <scope>NUCLEOTIDE SEQUENCE [LARGE SCALE GENOMIC DNA]</scope>
    <source>
        <strain>ATCC 25196 / NCIMB 11849 / C 71</strain>
    </source>
</reference>